<sequence>MLGKLLTKVFGSRNDRTLKNLGKIVIQINALEADYEKLSDEELKAKTTEFRTRLENGETLDNIMAEAFAVVREASKRVFDMRPFDVQLLGGMVLDSNRIAEMRTGEGKTLTATLPAYLNGITGKGVHVITVNDYLATRDAENNRPLFEFLGLSVGINVAGLGQFEKKQAYDADITYGTNNEFGFDYLRDNMAFSPQERVQRPLHYALIDEVDSILIDEARTPLIISGAAEDSSELYAKINLLIPSLIPQDKEDTEDYVGEGDYSIDEKGKQVHLTERGQEKVELLLIEKGMLAEGDSLYSATNISLLHHVNAALRAHTLFEKDIDYIVQDDEVIIVDEHTGRTMPGRRWSEGLHQAVEAKEGAKIQNENQTLASITFQNYFRQYEKLAGMTGTADTEAFEFQHIYGLDTVVVPTNRPMVRKDMADLVYLTAPEKYAAIIKDIEGCRERGQPVLVGTVSIEQSELLNSLLKKANIPHSVLNAKFHEKEAEIVAQAGSLGAVTIATNMAGRGTDIVLGGNWNMEIEALENPTAEQKAKIKADWKIRHDEVLAAGGLHILGTERHESRRIDNQLRGRAGRQGDAGSSRFYLSMEDSLMRIFASDRVSGMMKKLGMEEGEAIEHPWVSRAIENAQRKVEARNFDIRKQLLEYDDVANDQRQVVYAQRNELMDAESIQDTIQNIEQDVISGIVDQYIPPQSLEELWDVPGLEQRLGNEFGLKLTIQEWLDQDDNLHEETLRERILTSWSELYKAKEEMVGAQVLRQFEKAVMLQTLDGLWKEHLAAMDHLRQGIHLRGYAQKNPKQEYKRESFELFQQLLETLKNDVISVLSKVQVQAQSDVDEMEQRRRDEEAKIKLAYQHASVEALSDAGEQQIEAPKTVIREGEKIGRNDPCPCGSGQKYKQCHGKLS</sequence>
<protein>
    <recommendedName>
        <fullName evidence="1">Protein translocase subunit SecA</fullName>
        <ecNumber evidence="1">7.4.2.8</ecNumber>
    </recommendedName>
</protein>
<proteinExistence type="inferred from homology"/>
<accession>Q07WJ3</accession>
<feature type="chain" id="PRO_0000320993" description="Protein translocase subunit SecA">
    <location>
        <begin position="1"/>
        <end position="906"/>
    </location>
</feature>
<feature type="region of interest" description="Disordered" evidence="2">
    <location>
        <begin position="879"/>
        <end position="906"/>
    </location>
</feature>
<feature type="binding site" evidence="1">
    <location>
        <position position="87"/>
    </location>
    <ligand>
        <name>ATP</name>
        <dbReference type="ChEBI" id="CHEBI:30616"/>
    </ligand>
</feature>
<feature type="binding site" evidence="1">
    <location>
        <begin position="105"/>
        <end position="109"/>
    </location>
    <ligand>
        <name>ATP</name>
        <dbReference type="ChEBI" id="CHEBI:30616"/>
    </ligand>
</feature>
<feature type="binding site" evidence="1">
    <location>
        <position position="512"/>
    </location>
    <ligand>
        <name>ATP</name>
        <dbReference type="ChEBI" id="CHEBI:30616"/>
    </ligand>
</feature>
<feature type="binding site" evidence="1">
    <location>
        <position position="890"/>
    </location>
    <ligand>
        <name>Zn(2+)</name>
        <dbReference type="ChEBI" id="CHEBI:29105"/>
    </ligand>
</feature>
<feature type="binding site" evidence="1">
    <location>
        <position position="892"/>
    </location>
    <ligand>
        <name>Zn(2+)</name>
        <dbReference type="ChEBI" id="CHEBI:29105"/>
    </ligand>
</feature>
<feature type="binding site" evidence="1">
    <location>
        <position position="901"/>
    </location>
    <ligand>
        <name>Zn(2+)</name>
        <dbReference type="ChEBI" id="CHEBI:29105"/>
    </ligand>
</feature>
<feature type="binding site" evidence="1">
    <location>
        <position position="902"/>
    </location>
    <ligand>
        <name>Zn(2+)</name>
        <dbReference type="ChEBI" id="CHEBI:29105"/>
    </ligand>
</feature>
<name>SECA_SHEFN</name>
<keyword id="KW-0067">ATP-binding</keyword>
<keyword id="KW-0997">Cell inner membrane</keyword>
<keyword id="KW-1003">Cell membrane</keyword>
<keyword id="KW-0963">Cytoplasm</keyword>
<keyword id="KW-0472">Membrane</keyword>
<keyword id="KW-0479">Metal-binding</keyword>
<keyword id="KW-0547">Nucleotide-binding</keyword>
<keyword id="KW-0653">Protein transport</keyword>
<keyword id="KW-1185">Reference proteome</keyword>
<keyword id="KW-1278">Translocase</keyword>
<keyword id="KW-0811">Translocation</keyword>
<keyword id="KW-0813">Transport</keyword>
<keyword id="KW-0862">Zinc</keyword>
<comment type="function">
    <text evidence="1">Part of the Sec protein translocase complex. Interacts with the SecYEG preprotein conducting channel. Has a central role in coupling the hydrolysis of ATP to the transfer of proteins into and across the cell membrane, serving both as a receptor for the preprotein-SecB complex and as an ATP-driven molecular motor driving the stepwise translocation of polypeptide chains across the membrane.</text>
</comment>
<comment type="catalytic activity">
    <reaction evidence="1">
        <text>ATP + H2O + cellular proteinSide 1 = ADP + phosphate + cellular proteinSide 2.</text>
        <dbReference type="EC" id="7.4.2.8"/>
    </reaction>
</comment>
<comment type="cofactor">
    <cofactor evidence="1">
        <name>Zn(2+)</name>
        <dbReference type="ChEBI" id="CHEBI:29105"/>
    </cofactor>
    <text evidence="1">May bind 1 zinc ion per subunit.</text>
</comment>
<comment type="subunit">
    <text evidence="1">Monomer and homodimer. Part of the essential Sec protein translocation apparatus which comprises SecA, SecYEG and auxiliary proteins SecDF-YajC and YidC.</text>
</comment>
<comment type="subcellular location">
    <subcellularLocation>
        <location evidence="1">Cell inner membrane</location>
        <topology evidence="1">Peripheral membrane protein</topology>
        <orientation evidence="1">Cytoplasmic side</orientation>
    </subcellularLocation>
    <subcellularLocation>
        <location evidence="1">Cytoplasm</location>
    </subcellularLocation>
    <text evidence="1">Distribution is 50-50.</text>
</comment>
<comment type="similarity">
    <text evidence="1">Belongs to the SecA family.</text>
</comment>
<dbReference type="EC" id="7.4.2.8" evidence="1"/>
<dbReference type="EMBL" id="CP000447">
    <property type="protein sequence ID" value="ABI73621.1"/>
    <property type="molecule type" value="Genomic_DNA"/>
</dbReference>
<dbReference type="RefSeq" id="WP_011639206.1">
    <property type="nucleotide sequence ID" value="NC_008345.1"/>
</dbReference>
<dbReference type="SMR" id="Q07WJ3"/>
<dbReference type="STRING" id="318167.Sfri_3796"/>
<dbReference type="KEGG" id="sfr:Sfri_3796"/>
<dbReference type="eggNOG" id="COG0653">
    <property type="taxonomic scope" value="Bacteria"/>
</dbReference>
<dbReference type="HOGENOM" id="CLU_005314_3_0_6"/>
<dbReference type="OrthoDB" id="9805579at2"/>
<dbReference type="Proteomes" id="UP000000684">
    <property type="component" value="Chromosome"/>
</dbReference>
<dbReference type="GO" id="GO:0031522">
    <property type="term" value="C:cell envelope Sec protein transport complex"/>
    <property type="evidence" value="ECO:0007669"/>
    <property type="project" value="TreeGrafter"/>
</dbReference>
<dbReference type="GO" id="GO:0005829">
    <property type="term" value="C:cytosol"/>
    <property type="evidence" value="ECO:0007669"/>
    <property type="project" value="TreeGrafter"/>
</dbReference>
<dbReference type="GO" id="GO:0005886">
    <property type="term" value="C:plasma membrane"/>
    <property type="evidence" value="ECO:0007669"/>
    <property type="project" value="UniProtKB-SubCell"/>
</dbReference>
<dbReference type="GO" id="GO:0005524">
    <property type="term" value="F:ATP binding"/>
    <property type="evidence" value="ECO:0007669"/>
    <property type="project" value="UniProtKB-UniRule"/>
</dbReference>
<dbReference type="GO" id="GO:0046872">
    <property type="term" value="F:metal ion binding"/>
    <property type="evidence" value="ECO:0007669"/>
    <property type="project" value="UniProtKB-KW"/>
</dbReference>
<dbReference type="GO" id="GO:0008564">
    <property type="term" value="F:protein-exporting ATPase activity"/>
    <property type="evidence" value="ECO:0007669"/>
    <property type="project" value="UniProtKB-EC"/>
</dbReference>
<dbReference type="GO" id="GO:0065002">
    <property type="term" value="P:intracellular protein transmembrane transport"/>
    <property type="evidence" value="ECO:0007669"/>
    <property type="project" value="UniProtKB-UniRule"/>
</dbReference>
<dbReference type="GO" id="GO:0017038">
    <property type="term" value="P:protein import"/>
    <property type="evidence" value="ECO:0007669"/>
    <property type="project" value="InterPro"/>
</dbReference>
<dbReference type="GO" id="GO:0006605">
    <property type="term" value="P:protein targeting"/>
    <property type="evidence" value="ECO:0007669"/>
    <property type="project" value="UniProtKB-UniRule"/>
</dbReference>
<dbReference type="GO" id="GO:0043952">
    <property type="term" value="P:protein transport by the Sec complex"/>
    <property type="evidence" value="ECO:0007669"/>
    <property type="project" value="TreeGrafter"/>
</dbReference>
<dbReference type="CDD" id="cd17928">
    <property type="entry name" value="DEXDc_SecA"/>
    <property type="match status" value="1"/>
</dbReference>
<dbReference type="CDD" id="cd18803">
    <property type="entry name" value="SF2_C_secA"/>
    <property type="match status" value="1"/>
</dbReference>
<dbReference type="FunFam" id="1.10.3060.10:FF:000001">
    <property type="entry name" value="Preprotein translocase subunit SecA"/>
    <property type="match status" value="1"/>
</dbReference>
<dbReference type="FunFam" id="3.40.50.300:FF:000113">
    <property type="entry name" value="Preprotein translocase subunit SecA"/>
    <property type="match status" value="1"/>
</dbReference>
<dbReference type="FunFam" id="3.90.1440.10:FF:000001">
    <property type="entry name" value="Preprotein translocase subunit SecA"/>
    <property type="match status" value="1"/>
</dbReference>
<dbReference type="Gene3D" id="1.10.3060.10">
    <property type="entry name" value="Helical scaffold and wing domains of SecA"/>
    <property type="match status" value="1"/>
</dbReference>
<dbReference type="Gene3D" id="3.40.50.300">
    <property type="entry name" value="P-loop containing nucleotide triphosphate hydrolases"/>
    <property type="match status" value="2"/>
</dbReference>
<dbReference type="Gene3D" id="3.90.1440.10">
    <property type="entry name" value="SecA, preprotein cross-linking domain"/>
    <property type="match status" value="1"/>
</dbReference>
<dbReference type="HAMAP" id="MF_01382">
    <property type="entry name" value="SecA"/>
    <property type="match status" value="1"/>
</dbReference>
<dbReference type="InterPro" id="IPR014001">
    <property type="entry name" value="Helicase_ATP-bd"/>
</dbReference>
<dbReference type="InterPro" id="IPR001650">
    <property type="entry name" value="Helicase_C-like"/>
</dbReference>
<dbReference type="InterPro" id="IPR027417">
    <property type="entry name" value="P-loop_NTPase"/>
</dbReference>
<dbReference type="InterPro" id="IPR004027">
    <property type="entry name" value="SEC_C_motif"/>
</dbReference>
<dbReference type="InterPro" id="IPR000185">
    <property type="entry name" value="SecA"/>
</dbReference>
<dbReference type="InterPro" id="IPR020937">
    <property type="entry name" value="SecA_CS"/>
</dbReference>
<dbReference type="InterPro" id="IPR011115">
    <property type="entry name" value="SecA_DEAD"/>
</dbReference>
<dbReference type="InterPro" id="IPR014018">
    <property type="entry name" value="SecA_motor_DEAD"/>
</dbReference>
<dbReference type="InterPro" id="IPR011130">
    <property type="entry name" value="SecA_preprotein_X-link_dom"/>
</dbReference>
<dbReference type="InterPro" id="IPR044722">
    <property type="entry name" value="SecA_SF2_C"/>
</dbReference>
<dbReference type="InterPro" id="IPR011116">
    <property type="entry name" value="SecA_Wing/Scaffold"/>
</dbReference>
<dbReference type="InterPro" id="IPR036266">
    <property type="entry name" value="SecA_Wing/Scaffold_sf"/>
</dbReference>
<dbReference type="InterPro" id="IPR036670">
    <property type="entry name" value="SecA_X-link_sf"/>
</dbReference>
<dbReference type="NCBIfam" id="NF009538">
    <property type="entry name" value="PRK12904.1"/>
    <property type="match status" value="1"/>
</dbReference>
<dbReference type="NCBIfam" id="TIGR00963">
    <property type="entry name" value="secA"/>
    <property type="match status" value="1"/>
</dbReference>
<dbReference type="PANTHER" id="PTHR30612:SF0">
    <property type="entry name" value="CHLOROPLAST PROTEIN-TRANSPORTING ATPASE"/>
    <property type="match status" value="1"/>
</dbReference>
<dbReference type="PANTHER" id="PTHR30612">
    <property type="entry name" value="SECA INNER MEMBRANE COMPONENT OF SEC PROTEIN SECRETION SYSTEM"/>
    <property type="match status" value="1"/>
</dbReference>
<dbReference type="Pfam" id="PF21090">
    <property type="entry name" value="P-loop_SecA"/>
    <property type="match status" value="1"/>
</dbReference>
<dbReference type="Pfam" id="PF02810">
    <property type="entry name" value="SEC-C"/>
    <property type="match status" value="1"/>
</dbReference>
<dbReference type="Pfam" id="PF07517">
    <property type="entry name" value="SecA_DEAD"/>
    <property type="match status" value="1"/>
</dbReference>
<dbReference type="Pfam" id="PF01043">
    <property type="entry name" value="SecA_PP_bind"/>
    <property type="match status" value="1"/>
</dbReference>
<dbReference type="Pfam" id="PF07516">
    <property type="entry name" value="SecA_SW"/>
    <property type="match status" value="1"/>
</dbReference>
<dbReference type="PRINTS" id="PR00906">
    <property type="entry name" value="SECA"/>
</dbReference>
<dbReference type="SMART" id="SM00957">
    <property type="entry name" value="SecA_DEAD"/>
    <property type="match status" value="1"/>
</dbReference>
<dbReference type="SMART" id="SM00958">
    <property type="entry name" value="SecA_PP_bind"/>
    <property type="match status" value="1"/>
</dbReference>
<dbReference type="SUPFAM" id="SSF81886">
    <property type="entry name" value="Helical scaffold and wing domains of SecA"/>
    <property type="match status" value="1"/>
</dbReference>
<dbReference type="SUPFAM" id="SSF52540">
    <property type="entry name" value="P-loop containing nucleoside triphosphate hydrolases"/>
    <property type="match status" value="2"/>
</dbReference>
<dbReference type="SUPFAM" id="SSF81767">
    <property type="entry name" value="Pre-protein crosslinking domain of SecA"/>
    <property type="match status" value="1"/>
</dbReference>
<dbReference type="PROSITE" id="PS01312">
    <property type="entry name" value="SECA"/>
    <property type="match status" value="1"/>
</dbReference>
<dbReference type="PROSITE" id="PS51196">
    <property type="entry name" value="SECA_MOTOR_DEAD"/>
    <property type="match status" value="1"/>
</dbReference>
<gene>
    <name evidence="1" type="primary">secA</name>
    <name type="ordered locus">Sfri_3796</name>
</gene>
<reference key="1">
    <citation type="submission" date="2006-08" db="EMBL/GenBank/DDBJ databases">
        <title>Complete sequence of Shewanella frigidimarina NCIMB 400.</title>
        <authorList>
            <consortium name="US DOE Joint Genome Institute"/>
            <person name="Copeland A."/>
            <person name="Lucas S."/>
            <person name="Lapidus A."/>
            <person name="Barry K."/>
            <person name="Detter J.C."/>
            <person name="Glavina del Rio T."/>
            <person name="Hammon N."/>
            <person name="Israni S."/>
            <person name="Dalin E."/>
            <person name="Tice H."/>
            <person name="Pitluck S."/>
            <person name="Fredrickson J.K."/>
            <person name="Kolker E."/>
            <person name="McCuel L.A."/>
            <person name="DiChristina T."/>
            <person name="Nealson K.H."/>
            <person name="Newman D."/>
            <person name="Tiedje J.M."/>
            <person name="Zhou J."/>
            <person name="Romine M.F."/>
            <person name="Culley D.E."/>
            <person name="Serres M."/>
            <person name="Chertkov O."/>
            <person name="Brettin T."/>
            <person name="Bruce D."/>
            <person name="Han C."/>
            <person name="Tapia R."/>
            <person name="Gilna P."/>
            <person name="Schmutz J."/>
            <person name="Larimer F."/>
            <person name="Land M."/>
            <person name="Hauser L."/>
            <person name="Kyrpides N."/>
            <person name="Mikhailova N."/>
            <person name="Richardson P."/>
        </authorList>
    </citation>
    <scope>NUCLEOTIDE SEQUENCE [LARGE SCALE GENOMIC DNA]</scope>
    <source>
        <strain>NCIMB 400</strain>
    </source>
</reference>
<evidence type="ECO:0000255" key="1">
    <source>
        <dbReference type="HAMAP-Rule" id="MF_01382"/>
    </source>
</evidence>
<evidence type="ECO:0000256" key="2">
    <source>
        <dbReference type="SAM" id="MobiDB-lite"/>
    </source>
</evidence>
<organism>
    <name type="scientific">Shewanella frigidimarina (strain NCIMB 400)</name>
    <dbReference type="NCBI Taxonomy" id="318167"/>
    <lineage>
        <taxon>Bacteria</taxon>
        <taxon>Pseudomonadati</taxon>
        <taxon>Pseudomonadota</taxon>
        <taxon>Gammaproteobacteria</taxon>
        <taxon>Alteromonadales</taxon>
        <taxon>Shewanellaceae</taxon>
        <taxon>Shewanella</taxon>
    </lineage>
</organism>